<accession>Q9VNB3</accession>
<evidence type="ECO:0000250" key="1"/>
<evidence type="ECO:0000255" key="2"/>
<evidence type="ECO:0000269" key="3">
    <source>
    </source>
</evidence>
<evidence type="ECO:0000305" key="4"/>
<feature type="chain" id="PRO_0000174271" description="Odorant receptor 83a">
    <location>
        <begin position="1"/>
        <end position="453"/>
    </location>
</feature>
<feature type="topological domain" description="Cytoplasmic" evidence="2">
    <location>
        <begin position="1"/>
        <end position="28"/>
    </location>
</feature>
<feature type="transmembrane region" description="Helical; Name=1" evidence="2">
    <location>
        <begin position="29"/>
        <end position="49"/>
    </location>
</feature>
<feature type="topological domain" description="Extracellular" evidence="2">
    <location>
        <begin position="50"/>
        <end position="85"/>
    </location>
</feature>
<feature type="transmembrane region" description="Helical; Name=2" evidence="2">
    <location>
        <begin position="86"/>
        <end position="106"/>
    </location>
</feature>
<feature type="topological domain" description="Cytoplasmic" evidence="2">
    <location>
        <begin position="107"/>
        <end position="148"/>
    </location>
</feature>
<feature type="transmembrane region" description="Helical; Name=3" evidence="2">
    <location>
        <begin position="149"/>
        <end position="169"/>
    </location>
</feature>
<feature type="topological domain" description="Extracellular" evidence="2">
    <location>
        <begin position="170"/>
        <end position="203"/>
    </location>
</feature>
<feature type="transmembrane region" description="Helical; Name=4" evidence="2">
    <location>
        <begin position="204"/>
        <end position="224"/>
    </location>
</feature>
<feature type="topological domain" description="Cytoplasmic" evidence="2">
    <location>
        <begin position="225"/>
        <end position="322"/>
    </location>
</feature>
<feature type="transmembrane region" description="Helical; Name=5" evidence="2">
    <location>
        <begin position="323"/>
        <end position="343"/>
    </location>
</feature>
<feature type="topological domain" description="Extracellular" evidence="2">
    <location>
        <begin position="344"/>
        <end position="359"/>
    </location>
</feature>
<feature type="transmembrane region" description="Helical; Name=6" evidence="2">
    <location>
        <begin position="360"/>
        <end position="380"/>
    </location>
</feature>
<feature type="topological domain" description="Cytoplasmic" evidence="2">
    <location>
        <begin position="381"/>
        <end position="408"/>
    </location>
</feature>
<feature type="transmembrane region" description="Helical; Name=7" evidence="2">
    <location>
        <begin position="409"/>
        <end position="429"/>
    </location>
</feature>
<feature type="topological domain" description="Extracellular" evidence="2">
    <location>
        <begin position="430"/>
        <end position="453"/>
    </location>
</feature>
<keyword id="KW-1003">Cell membrane</keyword>
<keyword id="KW-0472">Membrane</keyword>
<keyword id="KW-0552">Olfaction</keyword>
<keyword id="KW-0675">Receptor</keyword>
<keyword id="KW-1185">Reference proteome</keyword>
<keyword id="KW-0716">Sensory transduction</keyword>
<keyword id="KW-0807">Transducer</keyword>
<keyword id="KW-0812">Transmembrane</keyword>
<keyword id="KW-1133">Transmembrane helix</keyword>
<name>OR83A_DROME</name>
<protein>
    <recommendedName>
        <fullName>Odorant receptor 83a</fullName>
    </recommendedName>
</protein>
<reference key="1">
    <citation type="journal article" date="2000" name="Science">
        <title>The genome sequence of Drosophila melanogaster.</title>
        <authorList>
            <person name="Adams M.D."/>
            <person name="Celniker S.E."/>
            <person name="Holt R.A."/>
            <person name="Evans C.A."/>
            <person name="Gocayne J.D."/>
            <person name="Amanatides P.G."/>
            <person name="Scherer S.E."/>
            <person name="Li P.W."/>
            <person name="Hoskins R.A."/>
            <person name="Galle R.F."/>
            <person name="George R.A."/>
            <person name="Lewis S.E."/>
            <person name="Richards S."/>
            <person name="Ashburner M."/>
            <person name="Henderson S.N."/>
            <person name="Sutton G.G."/>
            <person name="Wortman J.R."/>
            <person name="Yandell M.D."/>
            <person name="Zhang Q."/>
            <person name="Chen L.X."/>
            <person name="Brandon R.C."/>
            <person name="Rogers Y.-H.C."/>
            <person name="Blazej R.G."/>
            <person name="Champe M."/>
            <person name="Pfeiffer B.D."/>
            <person name="Wan K.H."/>
            <person name="Doyle C."/>
            <person name="Baxter E.G."/>
            <person name="Helt G."/>
            <person name="Nelson C.R."/>
            <person name="Miklos G.L.G."/>
            <person name="Abril J.F."/>
            <person name="Agbayani A."/>
            <person name="An H.-J."/>
            <person name="Andrews-Pfannkoch C."/>
            <person name="Baldwin D."/>
            <person name="Ballew R.M."/>
            <person name="Basu A."/>
            <person name="Baxendale J."/>
            <person name="Bayraktaroglu L."/>
            <person name="Beasley E.M."/>
            <person name="Beeson K.Y."/>
            <person name="Benos P.V."/>
            <person name="Berman B.P."/>
            <person name="Bhandari D."/>
            <person name="Bolshakov S."/>
            <person name="Borkova D."/>
            <person name="Botchan M.R."/>
            <person name="Bouck J."/>
            <person name="Brokstein P."/>
            <person name="Brottier P."/>
            <person name="Burtis K.C."/>
            <person name="Busam D.A."/>
            <person name="Butler H."/>
            <person name="Cadieu E."/>
            <person name="Center A."/>
            <person name="Chandra I."/>
            <person name="Cherry J.M."/>
            <person name="Cawley S."/>
            <person name="Dahlke C."/>
            <person name="Davenport L.B."/>
            <person name="Davies P."/>
            <person name="de Pablos B."/>
            <person name="Delcher A."/>
            <person name="Deng Z."/>
            <person name="Mays A.D."/>
            <person name="Dew I."/>
            <person name="Dietz S.M."/>
            <person name="Dodson K."/>
            <person name="Doup L.E."/>
            <person name="Downes M."/>
            <person name="Dugan-Rocha S."/>
            <person name="Dunkov B.C."/>
            <person name="Dunn P."/>
            <person name="Durbin K.J."/>
            <person name="Evangelista C.C."/>
            <person name="Ferraz C."/>
            <person name="Ferriera S."/>
            <person name="Fleischmann W."/>
            <person name="Fosler C."/>
            <person name="Gabrielian A.E."/>
            <person name="Garg N.S."/>
            <person name="Gelbart W.M."/>
            <person name="Glasser K."/>
            <person name="Glodek A."/>
            <person name="Gong F."/>
            <person name="Gorrell J.H."/>
            <person name="Gu Z."/>
            <person name="Guan P."/>
            <person name="Harris M."/>
            <person name="Harris N.L."/>
            <person name="Harvey D.A."/>
            <person name="Heiman T.J."/>
            <person name="Hernandez J.R."/>
            <person name="Houck J."/>
            <person name="Hostin D."/>
            <person name="Houston K.A."/>
            <person name="Howland T.J."/>
            <person name="Wei M.-H."/>
            <person name="Ibegwam C."/>
            <person name="Jalali M."/>
            <person name="Kalush F."/>
            <person name="Karpen G.H."/>
            <person name="Ke Z."/>
            <person name="Kennison J.A."/>
            <person name="Ketchum K.A."/>
            <person name="Kimmel B.E."/>
            <person name="Kodira C.D."/>
            <person name="Kraft C.L."/>
            <person name="Kravitz S."/>
            <person name="Kulp D."/>
            <person name="Lai Z."/>
            <person name="Lasko P."/>
            <person name="Lei Y."/>
            <person name="Levitsky A.A."/>
            <person name="Li J.H."/>
            <person name="Li Z."/>
            <person name="Liang Y."/>
            <person name="Lin X."/>
            <person name="Liu X."/>
            <person name="Mattei B."/>
            <person name="McIntosh T.C."/>
            <person name="McLeod M.P."/>
            <person name="McPherson D."/>
            <person name="Merkulov G."/>
            <person name="Milshina N.V."/>
            <person name="Mobarry C."/>
            <person name="Morris J."/>
            <person name="Moshrefi A."/>
            <person name="Mount S.M."/>
            <person name="Moy M."/>
            <person name="Murphy B."/>
            <person name="Murphy L."/>
            <person name="Muzny D.M."/>
            <person name="Nelson D.L."/>
            <person name="Nelson D.R."/>
            <person name="Nelson K.A."/>
            <person name="Nixon K."/>
            <person name="Nusskern D.R."/>
            <person name="Pacleb J.M."/>
            <person name="Palazzolo M."/>
            <person name="Pittman G.S."/>
            <person name="Pan S."/>
            <person name="Pollard J."/>
            <person name="Puri V."/>
            <person name="Reese M.G."/>
            <person name="Reinert K."/>
            <person name="Remington K."/>
            <person name="Saunders R.D.C."/>
            <person name="Scheeler F."/>
            <person name="Shen H."/>
            <person name="Shue B.C."/>
            <person name="Siden-Kiamos I."/>
            <person name="Simpson M."/>
            <person name="Skupski M.P."/>
            <person name="Smith T.J."/>
            <person name="Spier E."/>
            <person name="Spradling A.C."/>
            <person name="Stapleton M."/>
            <person name="Strong R."/>
            <person name="Sun E."/>
            <person name="Svirskas R."/>
            <person name="Tector C."/>
            <person name="Turner R."/>
            <person name="Venter E."/>
            <person name="Wang A.H."/>
            <person name="Wang X."/>
            <person name="Wang Z.-Y."/>
            <person name="Wassarman D.A."/>
            <person name="Weinstock G.M."/>
            <person name="Weissenbach J."/>
            <person name="Williams S.M."/>
            <person name="Woodage T."/>
            <person name="Worley K.C."/>
            <person name="Wu D."/>
            <person name="Yang S."/>
            <person name="Yao Q.A."/>
            <person name="Ye J."/>
            <person name="Yeh R.-F."/>
            <person name="Zaveri J.S."/>
            <person name="Zhan M."/>
            <person name="Zhang G."/>
            <person name="Zhao Q."/>
            <person name="Zheng L."/>
            <person name="Zheng X.H."/>
            <person name="Zhong F.N."/>
            <person name="Zhong W."/>
            <person name="Zhou X."/>
            <person name="Zhu S.C."/>
            <person name="Zhu X."/>
            <person name="Smith H.O."/>
            <person name="Gibbs R.A."/>
            <person name="Myers E.W."/>
            <person name="Rubin G.M."/>
            <person name="Venter J.C."/>
        </authorList>
    </citation>
    <scope>NUCLEOTIDE SEQUENCE [LARGE SCALE GENOMIC DNA]</scope>
    <source>
        <strain>Berkeley</strain>
    </source>
</reference>
<reference key="2">
    <citation type="journal article" date="2002" name="Genome Biol.">
        <title>Annotation of the Drosophila melanogaster euchromatic genome: a systematic review.</title>
        <authorList>
            <person name="Misra S."/>
            <person name="Crosby M.A."/>
            <person name="Mungall C.J."/>
            <person name="Matthews B.B."/>
            <person name="Campbell K.S."/>
            <person name="Hradecky P."/>
            <person name="Huang Y."/>
            <person name="Kaminker J.S."/>
            <person name="Millburn G.H."/>
            <person name="Prochnik S.E."/>
            <person name="Smith C.D."/>
            <person name="Tupy J.L."/>
            <person name="Whitfield E.J."/>
            <person name="Bayraktaroglu L."/>
            <person name="Berman B.P."/>
            <person name="Bettencourt B.R."/>
            <person name="Celniker S.E."/>
            <person name="de Grey A.D.N.J."/>
            <person name="Drysdale R.A."/>
            <person name="Harris N.L."/>
            <person name="Richter J."/>
            <person name="Russo S."/>
            <person name="Schroeder A.J."/>
            <person name="Shu S.Q."/>
            <person name="Stapleton M."/>
            <person name="Yamada C."/>
            <person name="Ashburner M."/>
            <person name="Gelbart W.M."/>
            <person name="Rubin G.M."/>
            <person name="Lewis S.E."/>
        </authorList>
    </citation>
    <scope>GENOME REANNOTATION</scope>
    <source>
        <strain>Berkeley</strain>
    </source>
</reference>
<reference key="3">
    <citation type="journal article" date="2011" name="PLoS ONE">
        <title>Modeling peripheral olfactory coding in Drosophila larvae.</title>
        <authorList>
            <person name="Hoare D.J."/>
            <person name="Humble J."/>
            <person name="Jin D."/>
            <person name="Gilding N."/>
            <person name="Petersen R."/>
            <person name="Cobb M."/>
            <person name="McCrohan C."/>
        </authorList>
    </citation>
    <scope>FUNCTION</scope>
</reference>
<comment type="function">
    <text evidence="3">Odorant receptor which mediates acceptance or avoidance behavior, depending on its substrates. The odorant receptor repertoire encodes a large collection of odor stimuli that vary widely in identity, intensity, and duration. May form a complex with Orco to form odorant-sensing units, providing sensitive and prolonged odorant signaling and calcium permeability. Involved in the behavioral responses to pentanol, ethyl acetate, and propyl acetate.</text>
</comment>
<comment type="subunit">
    <text evidence="1">Interacts with Orco. Complexes exist early in the endomembrane system in olfactory sensory neurons (OSNs), coupling these complexes to the conserved ciliary trafficking pathway (By similarity).</text>
</comment>
<comment type="subcellular location">
    <subcellularLocation>
        <location evidence="1">Cell membrane</location>
        <topology evidence="1">Multi-pass membrane protein</topology>
    </subcellularLocation>
</comment>
<comment type="miscellaneous">
    <text>The atypical heteromeric and topological design of the odorant receptors appears to be an insect-specific solution for odor recognition, making the OR/Orco complex an attractive target for the development of highly selective insect repellents to disrupt olfactory-mediated host-seeking behaviors of insect disease vectors. Odor-evoked OR currents are independent of known G-protein-coupled second messenger pathways.</text>
</comment>
<comment type="similarity">
    <text evidence="4">Belongs to the insect chemoreceptor superfamily. Heteromeric odorant receptor channel (TC 1.A.69) family. Or2a subfamily.</text>
</comment>
<gene>
    <name type="primary">Or83a</name>
    <name type="ORF">CG10612</name>
</gene>
<sequence length="453" mass="52272">MKSTFKEERIKDDSKRRDLFVFVRQTMCIAAMYPFGYYVNGSGVLAVLVRFCDLTYELFNYFVSVHIAGLYICTIYINYGQGDLDFFVNCLIQTIIYLWTIAMKLYFRRFRPGLLNTILSNINDEYETRSAVGFSFVTMAGSYRMSKLWIKTYVYCCYIGTIFWLALPIAYRDRSLPLACWYPFDYTQPGVYEVVFLLQAMGQIQVAASFASSSGLHMVLCVLISGQYDVLFCSLKNVLASSYVLMGANMTELNQLQAEQSAADVEPGQYAYSVEEETPLQELLKVGSSMDFSSAFRLSFVRCIQHHRYIVAALKKIESFYSPIWFVKIGEVTFLMCLVAFVSTKSTAANSFMRMVSLGQYLLLVLYELFIICYFADIVFQNSQRCGEALWRSPWQRHLKDVRSDYMFFMLNSRRQFQLTAGKISNLNVDRFRGTITTAFSFLTLLQKMDARE</sequence>
<dbReference type="EMBL" id="AE014297">
    <property type="protein sequence ID" value="AAF52033.2"/>
    <property type="molecule type" value="Genomic_DNA"/>
</dbReference>
<dbReference type="RefSeq" id="NP_524234.2">
    <property type="nucleotide sequence ID" value="NM_079510.2"/>
</dbReference>
<dbReference type="SMR" id="Q9VNB3"/>
<dbReference type="FunCoup" id="Q9VNB3">
    <property type="interactions" value="12"/>
</dbReference>
<dbReference type="STRING" id="7227.FBpp0078441"/>
<dbReference type="PaxDb" id="7227-FBpp0078441"/>
<dbReference type="EnsemblMetazoa" id="FBtr0078797">
    <property type="protein sequence ID" value="FBpp0078441"/>
    <property type="gene ID" value="FBgn0037322"/>
</dbReference>
<dbReference type="GeneID" id="40648"/>
<dbReference type="KEGG" id="dme:Dmel_CG10612"/>
<dbReference type="AGR" id="FB:FBgn0037322"/>
<dbReference type="CTD" id="40648"/>
<dbReference type="FlyBase" id="FBgn0037322">
    <property type="gene designation" value="Or83a"/>
</dbReference>
<dbReference type="VEuPathDB" id="VectorBase:FBgn0037322"/>
<dbReference type="eggNOG" id="ENOG502SAW0">
    <property type="taxonomic scope" value="Eukaryota"/>
</dbReference>
<dbReference type="HOGENOM" id="CLU_585637_0_0_1"/>
<dbReference type="InParanoid" id="Q9VNB3"/>
<dbReference type="OMA" id="YPFDYTQ"/>
<dbReference type="OrthoDB" id="6682367at2759"/>
<dbReference type="PhylomeDB" id="Q9VNB3"/>
<dbReference type="BioGRID-ORCS" id="40648">
    <property type="hits" value="0 hits in 1 CRISPR screen"/>
</dbReference>
<dbReference type="GenomeRNAi" id="40648"/>
<dbReference type="PRO" id="PR:Q9VNB3"/>
<dbReference type="Proteomes" id="UP000000803">
    <property type="component" value="Chromosome 3R"/>
</dbReference>
<dbReference type="ExpressionAtlas" id="Q9VNB3">
    <property type="expression patterns" value="differential"/>
</dbReference>
<dbReference type="GO" id="GO:0034703">
    <property type="term" value="C:cation channel complex"/>
    <property type="evidence" value="ECO:0000250"/>
    <property type="project" value="FlyBase"/>
</dbReference>
<dbReference type="GO" id="GO:0030425">
    <property type="term" value="C:dendrite"/>
    <property type="evidence" value="ECO:0000314"/>
    <property type="project" value="UniProtKB"/>
</dbReference>
<dbReference type="GO" id="GO:0032590">
    <property type="term" value="C:dendrite membrane"/>
    <property type="evidence" value="ECO:0000250"/>
    <property type="project" value="FlyBase"/>
</dbReference>
<dbReference type="GO" id="GO:0043025">
    <property type="term" value="C:neuronal cell body"/>
    <property type="evidence" value="ECO:0000314"/>
    <property type="project" value="UniProtKB"/>
</dbReference>
<dbReference type="GO" id="GO:0005886">
    <property type="term" value="C:plasma membrane"/>
    <property type="evidence" value="ECO:0000250"/>
    <property type="project" value="FlyBase"/>
</dbReference>
<dbReference type="GO" id="GO:0170020">
    <property type="term" value="F:ionotropic olfactory receptor activity"/>
    <property type="evidence" value="ECO:0000250"/>
    <property type="project" value="FlyBase"/>
</dbReference>
<dbReference type="GO" id="GO:0005549">
    <property type="term" value="F:odorant binding"/>
    <property type="evidence" value="ECO:0000250"/>
    <property type="project" value="FlyBase"/>
</dbReference>
<dbReference type="GO" id="GO:0004984">
    <property type="term" value="F:olfactory receptor activity"/>
    <property type="evidence" value="ECO:0000318"/>
    <property type="project" value="GO_Central"/>
</dbReference>
<dbReference type="GO" id="GO:0050911">
    <property type="term" value="P:detection of chemical stimulus involved in sensory perception of smell"/>
    <property type="evidence" value="ECO:0000250"/>
    <property type="project" value="FlyBase"/>
</dbReference>
<dbReference type="GO" id="GO:0042048">
    <property type="term" value="P:olfactory behavior"/>
    <property type="evidence" value="ECO:0000315"/>
    <property type="project" value="UniProtKB"/>
</dbReference>
<dbReference type="GO" id="GO:0008104">
    <property type="term" value="P:protein localization"/>
    <property type="evidence" value="ECO:0000315"/>
    <property type="project" value="UniProtKB"/>
</dbReference>
<dbReference type="GO" id="GO:0007608">
    <property type="term" value="P:sensory perception of smell"/>
    <property type="evidence" value="ECO:0000315"/>
    <property type="project" value="UniProtKB"/>
</dbReference>
<dbReference type="GO" id="GO:0007165">
    <property type="term" value="P:signal transduction"/>
    <property type="evidence" value="ECO:0007669"/>
    <property type="project" value="UniProtKB-KW"/>
</dbReference>
<dbReference type="InterPro" id="IPR004117">
    <property type="entry name" value="7tm6_olfct_rcpt"/>
</dbReference>
<dbReference type="PANTHER" id="PTHR21137">
    <property type="entry name" value="ODORANT RECEPTOR"/>
    <property type="match status" value="1"/>
</dbReference>
<dbReference type="PANTHER" id="PTHR21137:SF42">
    <property type="entry name" value="ODORANT RECEPTOR 83A"/>
    <property type="match status" value="1"/>
</dbReference>
<dbReference type="Pfam" id="PF02949">
    <property type="entry name" value="7tm_6"/>
    <property type="match status" value="1"/>
</dbReference>
<proteinExistence type="inferred from homology"/>
<organism>
    <name type="scientific">Drosophila melanogaster</name>
    <name type="common">Fruit fly</name>
    <dbReference type="NCBI Taxonomy" id="7227"/>
    <lineage>
        <taxon>Eukaryota</taxon>
        <taxon>Metazoa</taxon>
        <taxon>Ecdysozoa</taxon>
        <taxon>Arthropoda</taxon>
        <taxon>Hexapoda</taxon>
        <taxon>Insecta</taxon>
        <taxon>Pterygota</taxon>
        <taxon>Neoptera</taxon>
        <taxon>Endopterygota</taxon>
        <taxon>Diptera</taxon>
        <taxon>Brachycera</taxon>
        <taxon>Muscomorpha</taxon>
        <taxon>Ephydroidea</taxon>
        <taxon>Drosophilidae</taxon>
        <taxon>Drosophila</taxon>
        <taxon>Sophophora</taxon>
    </lineage>
</organism>